<proteinExistence type="inferred from homology"/>
<accession>B9KJ64</accession>
<reference key="1">
    <citation type="journal article" date="2009" name="BMC Genomics">
        <title>Conservation in the face of diversity: multistrain analysis of an intracellular bacterium.</title>
        <authorList>
            <person name="Dark M.J."/>
            <person name="Herndon D.R."/>
            <person name="Kappmeyer L.S."/>
            <person name="Gonzales M.P."/>
            <person name="Nordeen E."/>
            <person name="Palmer G.H."/>
            <person name="Knowles D.P. Jr."/>
            <person name="Brayton K.A."/>
        </authorList>
    </citation>
    <scope>NUCLEOTIDE SEQUENCE [LARGE SCALE GENOMIC DNA]</scope>
    <source>
        <strain>Florida</strain>
    </source>
</reference>
<sequence length="211" mass="23200">MGQKSNPIGLRLGIVGTWDSLWYAGGGYASKLHEDLLLRSFVKKTFHHAAVSRVVIARKVDAVIINIHSARPGVIIGKKGTDIDRVKQKIAQMVNHDVELHIVEVKKPDLKAALIAENIAQQLEKRVSFRRAMKRGVQNCLKLGARGVKVSCSGRLGGAEIARTEWYKEGSVPLHTFRANIDYSCAEAKTIYGIVGVKVWVYVGDSRTGGE</sequence>
<feature type="chain" id="PRO_1000165474" description="Small ribosomal subunit protein uS3">
    <location>
        <begin position="1"/>
        <end position="211"/>
    </location>
</feature>
<feature type="domain" description="KH type-2" evidence="1">
    <location>
        <begin position="38"/>
        <end position="106"/>
    </location>
</feature>
<protein>
    <recommendedName>
        <fullName evidence="1">Small ribosomal subunit protein uS3</fullName>
    </recommendedName>
    <alternativeName>
        <fullName evidence="2">30S ribosomal protein S3</fullName>
    </alternativeName>
</protein>
<evidence type="ECO:0000255" key="1">
    <source>
        <dbReference type="HAMAP-Rule" id="MF_01309"/>
    </source>
</evidence>
<evidence type="ECO:0000305" key="2"/>
<name>RS3_ANAMF</name>
<gene>
    <name evidence="1" type="primary">rpsC</name>
    <name type="ordered locus">AMF_690</name>
</gene>
<keyword id="KW-1185">Reference proteome</keyword>
<keyword id="KW-0687">Ribonucleoprotein</keyword>
<keyword id="KW-0689">Ribosomal protein</keyword>
<keyword id="KW-0694">RNA-binding</keyword>
<keyword id="KW-0699">rRNA-binding</keyword>
<comment type="function">
    <text evidence="1">Binds the lower part of the 30S subunit head. Binds mRNA in the 70S ribosome, positioning it for translation.</text>
</comment>
<comment type="subunit">
    <text evidence="1">Part of the 30S ribosomal subunit. Forms a tight complex with proteins S10 and S14.</text>
</comment>
<comment type="similarity">
    <text evidence="1">Belongs to the universal ribosomal protein uS3 family.</text>
</comment>
<organism>
    <name type="scientific">Anaplasma marginale (strain Florida)</name>
    <dbReference type="NCBI Taxonomy" id="320483"/>
    <lineage>
        <taxon>Bacteria</taxon>
        <taxon>Pseudomonadati</taxon>
        <taxon>Pseudomonadota</taxon>
        <taxon>Alphaproteobacteria</taxon>
        <taxon>Rickettsiales</taxon>
        <taxon>Anaplasmataceae</taxon>
        <taxon>Anaplasma</taxon>
    </lineage>
</organism>
<dbReference type="EMBL" id="CP001079">
    <property type="protein sequence ID" value="ACM49526.1"/>
    <property type="molecule type" value="Genomic_DNA"/>
</dbReference>
<dbReference type="RefSeq" id="WP_010265292.1">
    <property type="nucleotide sequence ID" value="NZ_AFMS01000137.1"/>
</dbReference>
<dbReference type="SMR" id="B9KJ64"/>
<dbReference type="STRING" id="320483.AMF_690"/>
<dbReference type="GeneID" id="7397872"/>
<dbReference type="KEGG" id="amf:AMF_690"/>
<dbReference type="eggNOG" id="COG0092">
    <property type="taxonomic scope" value="Bacteria"/>
</dbReference>
<dbReference type="HOGENOM" id="CLU_058591_0_2_5"/>
<dbReference type="Proteomes" id="UP000007307">
    <property type="component" value="Chromosome"/>
</dbReference>
<dbReference type="GO" id="GO:0022627">
    <property type="term" value="C:cytosolic small ribosomal subunit"/>
    <property type="evidence" value="ECO:0007669"/>
    <property type="project" value="TreeGrafter"/>
</dbReference>
<dbReference type="GO" id="GO:0003729">
    <property type="term" value="F:mRNA binding"/>
    <property type="evidence" value="ECO:0007669"/>
    <property type="project" value="UniProtKB-UniRule"/>
</dbReference>
<dbReference type="GO" id="GO:0019843">
    <property type="term" value="F:rRNA binding"/>
    <property type="evidence" value="ECO:0007669"/>
    <property type="project" value="UniProtKB-UniRule"/>
</dbReference>
<dbReference type="GO" id="GO:0003735">
    <property type="term" value="F:structural constituent of ribosome"/>
    <property type="evidence" value="ECO:0007669"/>
    <property type="project" value="InterPro"/>
</dbReference>
<dbReference type="GO" id="GO:0006412">
    <property type="term" value="P:translation"/>
    <property type="evidence" value="ECO:0007669"/>
    <property type="project" value="UniProtKB-UniRule"/>
</dbReference>
<dbReference type="CDD" id="cd02412">
    <property type="entry name" value="KH-II_30S_S3"/>
    <property type="match status" value="1"/>
</dbReference>
<dbReference type="FunFam" id="3.30.300.20:FF:000001">
    <property type="entry name" value="30S ribosomal protein S3"/>
    <property type="match status" value="1"/>
</dbReference>
<dbReference type="Gene3D" id="3.30.300.20">
    <property type="match status" value="1"/>
</dbReference>
<dbReference type="Gene3D" id="3.30.1140.32">
    <property type="entry name" value="Ribosomal protein S3, C-terminal domain"/>
    <property type="match status" value="1"/>
</dbReference>
<dbReference type="HAMAP" id="MF_01309_B">
    <property type="entry name" value="Ribosomal_uS3_B"/>
    <property type="match status" value="1"/>
</dbReference>
<dbReference type="InterPro" id="IPR004087">
    <property type="entry name" value="KH_dom"/>
</dbReference>
<dbReference type="InterPro" id="IPR015946">
    <property type="entry name" value="KH_dom-like_a/b"/>
</dbReference>
<dbReference type="InterPro" id="IPR004044">
    <property type="entry name" value="KH_dom_type_2"/>
</dbReference>
<dbReference type="InterPro" id="IPR009019">
    <property type="entry name" value="KH_sf_prok-type"/>
</dbReference>
<dbReference type="InterPro" id="IPR036419">
    <property type="entry name" value="Ribosomal_S3_C_sf"/>
</dbReference>
<dbReference type="InterPro" id="IPR005704">
    <property type="entry name" value="Ribosomal_uS3_bac-typ"/>
</dbReference>
<dbReference type="InterPro" id="IPR001351">
    <property type="entry name" value="Ribosomal_uS3_C"/>
</dbReference>
<dbReference type="InterPro" id="IPR018280">
    <property type="entry name" value="Ribosomal_uS3_CS"/>
</dbReference>
<dbReference type="NCBIfam" id="TIGR01009">
    <property type="entry name" value="rpsC_bact"/>
    <property type="match status" value="1"/>
</dbReference>
<dbReference type="PANTHER" id="PTHR11760">
    <property type="entry name" value="30S/40S RIBOSOMAL PROTEIN S3"/>
    <property type="match status" value="1"/>
</dbReference>
<dbReference type="PANTHER" id="PTHR11760:SF19">
    <property type="entry name" value="SMALL RIBOSOMAL SUBUNIT PROTEIN US3C"/>
    <property type="match status" value="1"/>
</dbReference>
<dbReference type="Pfam" id="PF07650">
    <property type="entry name" value="KH_2"/>
    <property type="match status" value="1"/>
</dbReference>
<dbReference type="Pfam" id="PF00189">
    <property type="entry name" value="Ribosomal_S3_C"/>
    <property type="match status" value="1"/>
</dbReference>
<dbReference type="SMART" id="SM00322">
    <property type="entry name" value="KH"/>
    <property type="match status" value="1"/>
</dbReference>
<dbReference type="SUPFAM" id="SSF54814">
    <property type="entry name" value="Prokaryotic type KH domain (KH-domain type II)"/>
    <property type="match status" value="1"/>
</dbReference>
<dbReference type="SUPFAM" id="SSF54821">
    <property type="entry name" value="Ribosomal protein S3 C-terminal domain"/>
    <property type="match status" value="1"/>
</dbReference>
<dbReference type="PROSITE" id="PS50823">
    <property type="entry name" value="KH_TYPE_2"/>
    <property type="match status" value="1"/>
</dbReference>
<dbReference type="PROSITE" id="PS00548">
    <property type="entry name" value="RIBOSOMAL_S3"/>
    <property type="match status" value="1"/>
</dbReference>